<evidence type="ECO:0000250" key="1">
    <source>
        <dbReference type="UniProtKB" id="P31080"/>
    </source>
</evidence>
<evidence type="ECO:0000269" key="2">
    <source>
    </source>
</evidence>
<evidence type="ECO:0000303" key="3">
    <source>
    </source>
</evidence>
<evidence type="ECO:0000305" key="4"/>
<evidence type="ECO:0000305" key="5">
    <source>
    </source>
</evidence>
<keyword id="KW-0227">DNA damage</keyword>
<keyword id="KW-0234">DNA repair</keyword>
<keyword id="KW-0235">DNA replication</keyword>
<keyword id="KW-0238">DNA-binding</keyword>
<keyword id="KW-0378">Hydrolase</keyword>
<keyword id="KW-1185">Reference proteome</keyword>
<keyword id="KW-0678">Repressor</keyword>
<keyword id="KW-0742">SOS response</keyword>
<keyword id="KW-0804">Transcription</keyword>
<keyword id="KW-0805">Transcription regulation</keyword>
<dbReference type="EC" id="3.4.21.88"/>
<dbReference type="EMBL" id="CP001032">
    <property type="protein sequence ID" value="ACB77330.1"/>
    <property type="molecule type" value="Genomic_DNA"/>
</dbReference>
<dbReference type="RefSeq" id="WP_012376858.1">
    <property type="nucleotide sequence ID" value="NC_010571.1"/>
</dbReference>
<dbReference type="SMR" id="B1ZZZ4"/>
<dbReference type="STRING" id="452637.Oter_4056"/>
<dbReference type="MEROPS" id="S24.001"/>
<dbReference type="KEGG" id="ote:Oter_4056"/>
<dbReference type="eggNOG" id="COG1974">
    <property type="taxonomic scope" value="Bacteria"/>
</dbReference>
<dbReference type="HOGENOM" id="CLU_066192_45_2_0"/>
<dbReference type="OrthoDB" id="9802364at2"/>
<dbReference type="Proteomes" id="UP000007013">
    <property type="component" value="Chromosome"/>
</dbReference>
<dbReference type="GO" id="GO:0003677">
    <property type="term" value="F:DNA binding"/>
    <property type="evidence" value="ECO:0007669"/>
    <property type="project" value="UniProtKB-KW"/>
</dbReference>
<dbReference type="GO" id="GO:0004252">
    <property type="term" value="F:serine-type endopeptidase activity"/>
    <property type="evidence" value="ECO:0007669"/>
    <property type="project" value="UniProtKB-EC"/>
</dbReference>
<dbReference type="GO" id="GO:0006281">
    <property type="term" value="P:DNA repair"/>
    <property type="evidence" value="ECO:0007669"/>
    <property type="project" value="UniProtKB-KW"/>
</dbReference>
<dbReference type="GO" id="GO:0006260">
    <property type="term" value="P:DNA replication"/>
    <property type="evidence" value="ECO:0007669"/>
    <property type="project" value="UniProtKB-KW"/>
</dbReference>
<dbReference type="GO" id="GO:0045892">
    <property type="term" value="P:negative regulation of DNA-templated transcription"/>
    <property type="evidence" value="ECO:0007669"/>
    <property type="project" value="InterPro"/>
</dbReference>
<dbReference type="GO" id="GO:0006508">
    <property type="term" value="P:proteolysis"/>
    <property type="evidence" value="ECO:0007669"/>
    <property type="project" value="InterPro"/>
</dbReference>
<dbReference type="GO" id="GO:0009432">
    <property type="term" value="P:SOS response"/>
    <property type="evidence" value="ECO:0007669"/>
    <property type="project" value="UniProtKB-KW"/>
</dbReference>
<dbReference type="CDD" id="cd06529">
    <property type="entry name" value="S24_LexA-like"/>
    <property type="match status" value="1"/>
</dbReference>
<dbReference type="Gene3D" id="2.10.109.10">
    <property type="entry name" value="Umud Fragment, subunit A"/>
    <property type="match status" value="1"/>
</dbReference>
<dbReference type="Gene3D" id="1.10.10.10">
    <property type="entry name" value="Winged helix-like DNA-binding domain superfamily/Winged helix DNA-binding domain"/>
    <property type="match status" value="1"/>
</dbReference>
<dbReference type="InterPro" id="IPR006200">
    <property type="entry name" value="LexA"/>
</dbReference>
<dbReference type="InterPro" id="IPR039418">
    <property type="entry name" value="LexA-like"/>
</dbReference>
<dbReference type="InterPro" id="IPR036286">
    <property type="entry name" value="LexA/Signal_pep-like_sf"/>
</dbReference>
<dbReference type="InterPro" id="IPR006199">
    <property type="entry name" value="LexA_DNA-bd_dom"/>
</dbReference>
<dbReference type="InterPro" id="IPR050077">
    <property type="entry name" value="LexA_repressor"/>
</dbReference>
<dbReference type="InterPro" id="IPR015927">
    <property type="entry name" value="Peptidase_S24_S26A/B/C"/>
</dbReference>
<dbReference type="InterPro" id="IPR036388">
    <property type="entry name" value="WH-like_DNA-bd_sf"/>
</dbReference>
<dbReference type="InterPro" id="IPR036390">
    <property type="entry name" value="WH_DNA-bd_sf"/>
</dbReference>
<dbReference type="NCBIfam" id="TIGR00498">
    <property type="entry name" value="lexA"/>
    <property type="match status" value="1"/>
</dbReference>
<dbReference type="PANTHER" id="PTHR33516">
    <property type="entry name" value="LEXA REPRESSOR"/>
    <property type="match status" value="1"/>
</dbReference>
<dbReference type="PANTHER" id="PTHR33516:SF2">
    <property type="entry name" value="LEXA REPRESSOR-RELATED"/>
    <property type="match status" value="1"/>
</dbReference>
<dbReference type="Pfam" id="PF01726">
    <property type="entry name" value="LexA_DNA_bind"/>
    <property type="match status" value="1"/>
</dbReference>
<dbReference type="Pfam" id="PF00717">
    <property type="entry name" value="Peptidase_S24"/>
    <property type="match status" value="1"/>
</dbReference>
<dbReference type="SUPFAM" id="SSF51306">
    <property type="entry name" value="LexA/Signal peptidase"/>
    <property type="match status" value="1"/>
</dbReference>
<dbReference type="SUPFAM" id="SSF46785">
    <property type="entry name" value="Winged helix' DNA-binding domain"/>
    <property type="match status" value="1"/>
</dbReference>
<sequence>MLTEKQEAILDYIRSVQAQRGVPPSTREIQRHFGYESQNAAMNHLRALARKGQLHQVDGATWGLKVSEVQGHFELPIYGTIPAGVPSMQEQQPKETITFDPAVFRLRRPERLWGLEVHGDSMIDAHILDGDIAVLERREAKPGDIVAALVDETTTTLKRLAYVKGKPVLKPENARYALIVPKDRLEIQGVFVGLIGRAKR</sequence>
<organism>
    <name type="scientific">Opitutus terrae (strain DSM 11246 / JCM 15787 / PB90-1)</name>
    <dbReference type="NCBI Taxonomy" id="452637"/>
    <lineage>
        <taxon>Bacteria</taxon>
        <taxon>Pseudomonadati</taxon>
        <taxon>Verrucomicrobiota</taxon>
        <taxon>Opitutia</taxon>
        <taxon>Opitutales</taxon>
        <taxon>Opitutaceae</taxon>
        <taxon>Opitutus</taxon>
    </lineage>
</organism>
<gene>
    <name evidence="3" type="primary">lexA</name>
    <name type="ordered locus">Oter_4056</name>
</gene>
<protein>
    <recommendedName>
        <fullName>LexA repressor</fullName>
        <ecNumber>3.4.21.88</ecNumber>
    </recommendedName>
</protein>
<feature type="chain" id="PRO_0000438701" description="LexA repressor">
    <location>
        <begin position="1"/>
        <end position="200"/>
    </location>
</feature>
<feature type="active site" description="For autocatalytic cleavage activity" evidence="1">
    <location>
        <position position="121"/>
    </location>
</feature>
<feature type="active site" description="For autocatalytic cleavage activity" evidence="1">
    <location>
        <position position="158"/>
    </location>
</feature>
<feature type="site" description="Cleavage; by autolysis" evidence="1">
    <location>
        <begin position="83"/>
        <end position="84"/>
    </location>
</feature>
<name>LEXA_OPITP</name>
<reference key="1">
    <citation type="journal article" date="2011" name="J. Bacteriol.">
        <title>Genome sequence of the verrucomicrobium Opitutus terrae PB90-1, an abundant inhabitant of rice paddy soil ecosystems.</title>
        <authorList>
            <person name="van Passel M.W."/>
            <person name="Kant R."/>
            <person name="Palva A."/>
            <person name="Copeland A."/>
            <person name="Lucas S."/>
            <person name="Lapidus A."/>
            <person name="Glavina del Rio T."/>
            <person name="Pitluck S."/>
            <person name="Goltsman E."/>
            <person name="Clum A."/>
            <person name="Sun H."/>
            <person name="Schmutz J."/>
            <person name="Larimer F.W."/>
            <person name="Land M.L."/>
            <person name="Hauser L."/>
            <person name="Kyrpides N."/>
            <person name="Mikhailova N."/>
            <person name="Richardson P.P."/>
            <person name="Janssen P.H."/>
            <person name="de Vos W.M."/>
            <person name="Smidt H."/>
        </authorList>
    </citation>
    <scope>NUCLEOTIDE SEQUENCE [LARGE SCALE GENOMIC DNA]</scope>
    <source>
        <strain>DSM 11246 / JCM 15787 / PB90-1</strain>
    </source>
</reference>
<reference key="2">
    <citation type="journal article" date="2016" name="Front. Mol. Biosci.">
        <title>The Verrucomicrobia LexA-binding motif: insights into the evolutionary dynamics of the SOS response.</title>
        <authorList>
            <person name="Erill I."/>
            <person name="Campoy S."/>
            <person name="Kilic S."/>
            <person name="Barbe J."/>
        </authorList>
    </citation>
    <scope>DNA-BINDING</scope>
    <scope>SUBUNIT</scope>
    <scope>FUNCTION</scope>
    <source>
        <strain>DSM 11246 / JCM 15787 / PB90-1</strain>
    </source>
</reference>
<accession>B1ZZZ4</accession>
<comment type="function">
    <text evidence="1 2">Binds a consensus sequence 5'-TGTTC-N(4)-GAACA-3'; some genes have a tandem consensus sequence and their binding is cooperative (PubMed:27489856). Binds to the promoters of a number of genes, including lexA and splB (PubMed:27489856). Represses a number of genes involved in the response to DNA damage (SOS response).</text>
</comment>
<comment type="catalytic activity">
    <reaction evidence="1">
        <text>Hydrolysis of Ala-|-Gly bond in repressor LexA.</text>
        <dbReference type="EC" id="3.4.21.88"/>
    </reaction>
</comment>
<comment type="subunit">
    <text evidence="5">Homodimer.</text>
</comment>
<comment type="similarity">
    <text evidence="4">Belongs to the peptidase S24 family.</text>
</comment>
<proteinExistence type="evidence at protein level"/>